<dbReference type="EC" id="3.5.2.7" evidence="1"/>
<dbReference type="EMBL" id="AM933173">
    <property type="protein sequence ID" value="CAR36661.1"/>
    <property type="molecule type" value="Genomic_DNA"/>
</dbReference>
<dbReference type="RefSeq" id="WP_001249485.1">
    <property type="nucleotide sequence ID" value="NC_011274.1"/>
</dbReference>
<dbReference type="SMR" id="B5R754"/>
<dbReference type="KEGG" id="seg:SG0765"/>
<dbReference type="HOGENOM" id="CLU_041647_0_0_6"/>
<dbReference type="UniPathway" id="UPA00379">
    <property type="reaction ID" value="UER00551"/>
</dbReference>
<dbReference type="Proteomes" id="UP000008321">
    <property type="component" value="Chromosome"/>
</dbReference>
<dbReference type="GO" id="GO:0005737">
    <property type="term" value="C:cytoplasm"/>
    <property type="evidence" value="ECO:0007669"/>
    <property type="project" value="UniProtKB-SubCell"/>
</dbReference>
<dbReference type="GO" id="GO:0050480">
    <property type="term" value="F:imidazolonepropionase activity"/>
    <property type="evidence" value="ECO:0007669"/>
    <property type="project" value="UniProtKB-UniRule"/>
</dbReference>
<dbReference type="GO" id="GO:0005506">
    <property type="term" value="F:iron ion binding"/>
    <property type="evidence" value="ECO:0007669"/>
    <property type="project" value="UniProtKB-UniRule"/>
</dbReference>
<dbReference type="GO" id="GO:0008270">
    <property type="term" value="F:zinc ion binding"/>
    <property type="evidence" value="ECO:0007669"/>
    <property type="project" value="UniProtKB-UniRule"/>
</dbReference>
<dbReference type="GO" id="GO:0019556">
    <property type="term" value="P:L-histidine catabolic process to glutamate and formamide"/>
    <property type="evidence" value="ECO:0007669"/>
    <property type="project" value="UniProtKB-UniPathway"/>
</dbReference>
<dbReference type="GO" id="GO:0019557">
    <property type="term" value="P:L-histidine catabolic process to glutamate and formate"/>
    <property type="evidence" value="ECO:0007669"/>
    <property type="project" value="UniProtKB-UniPathway"/>
</dbReference>
<dbReference type="FunFam" id="3.20.20.140:FF:000007">
    <property type="entry name" value="Imidazolonepropionase"/>
    <property type="match status" value="1"/>
</dbReference>
<dbReference type="Gene3D" id="3.20.20.140">
    <property type="entry name" value="Metal-dependent hydrolases"/>
    <property type="match status" value="1"/>
</dbReference>
<dbReference type="Gene3D" id="2.30.40.10">
    <property type="entry name" value="Urease, subunit C, domain 1"/>
    <property type="match status" value="1"/>
</dbReference>
<dbReference type="HAMAP" id="MF_00372">
    <property type="entry name" value="HutI"/>
    <property type="match status" value="1"/>
</dbReference>
<dbReference type="InterPro" id="IPR006680">
    <property type="entry name" value="Amidohydro-rel"/>
</dbReference>
<dbReference type="InterPro" id="IPR005920">
    <property type="entry name" value="HutI"/>
</dbReference>
<dbReference type="InterPro" id="IPR011059">
    <property type="entry name" value="Metal-dep_hydrolase_composite"/>
</dbReference>
<dbReference type="InterPro" id="IPR032466">
    <property type="entry name" value="Metal_Hydrolase"/>
</dbReference>
<dbReference type="NCBIfam" id="TIGR01224">
    <property type="entry name" value="hutI"/>
    <property type="match status" value="1"/>
</dbReference>
<dbReference type="PANTHER" id="PTHR42752">
    <property type="entry name" value="IMIDAZOLONEPROPIONASE"/>
    <property type="match status" value="1"/>
</dbReference>
<dbReference type="PANTHER" id="PTHR42752:SF1">
    <property type="entry name" value="IMIDAZOLONEPROPIONASE-RELATED"/>
    <property type="match status" value="1"/>
</dbReference>
<dbReference type="Pfam" id="PF01979">
    <property type="entry name" value="Amidohydro_1"/>
    <property type="match status" value="1"/>
</dbReference>
<dbReference type="SUPFAM" id="SSF51338">
    <property type="entry name" value="Composite domain of metallo-dependent hydrolases"/>
    <property type="match status" value="1"/>
</dbReference>
<dbReference type="SUPFAM" id="SSF51556">
    <property type="entry name" value="Metallo-dependent hydrolases"/>
    <property type="match status" value="1"/>
</dbReference>
<proteinExistence type="inferred from homology"/>
<keyword id="KW-0963">Cytoplasm</keyword>
<keyword id="KW-0369">Histidine metabolism</keyword>
<keyword id="KW-0378">Hydrolase</keyword>
<keyword id="KW-0408">Iron</keyword>
<keyword id="KW-0479">Metal-binding</keyword>
<keyword id="KW-0862">Zinc</keyword>
<evidence type="ECO:0000255" key="1">
    <source>
        <dbReference type="HAMAP-Rule" id="MF_00372"/>
    </source>
</evidence>
<sequence length="407" mass="44647">MRQLLPGDTVWRNIRLATMDPQRQAPYGLVDNQALIVREGHICDIVPETQLPVSGDNIHDMQGRLVTPGLIDCHTHLVFAGNRAAEWEQRLNGASYQHISAQGGGINATVSATRACAEETLYLLARERMMRLASEGVTLLEIKSGYGLELATEEKLLRVAAKLAAENAIDISPTLLAAHATPAEYRDDPDGYITLVCETMIPQLWQKGLFDAVDLFCESVGFNVAQSERVLQTAKALGIPVKGHVEQLSLLGGAQLVSRYQGLSADHIEYLDEAGVAAMRDGGTVGVLLPGAFYFLRETQRPPVELLRRYQVPVAVASDFNPGTSPFCSLHLAMNMACVQFGLTSEEAWAGVTRHAARALGRQATHGQLRADYRADFVVWDAEQPVEVVYEPGRNPLYQRVYRGQIS</sequence>
<gene>
    <name evidence="1" type="primary">hutI</name>
    <name type="ordered locus">SG0765</name>
</gene>
<protein>
    <recommendedName>
        <fullName evidence="1">Imidazolonepropionase</fullName>
        <ecNumber evidence="1">3.5.2.7</ecNumber>
    </recommendedName>
    <alternativeName>
        <fullName evidence="1">Imidazolone-5-propionate hydrolase</fullName>
    </alternativeName>
</protein>
<reference key="1">
    <citation type="journal article" date="2008" name="Genome Res.">
        <title>Comparative genome analysis of Salmonella enteritidis PT4 and Salmonella gallinarum 287/91 provides insights into evolutionary and host adaptation pathways.</title>
        <authorList>
            <person name="Thomson N.R."/>
            <person name="Clayton D.J."/>
            <person name="Windhorst D."/>
            <person name="Vernikos G."/>
            <person name="Davidson S."/>
            <person name="Churcher C."/>
            <person name="Quail M.A."/>
            <person name="Stevens M."/>
            <person name="Jones M.A."/>
            <person name="Watson M."/>
            <person name="Barron A."/>
            <person name="Layton A."/>
            <person name="Pickard D."/>
            <person name="Kingsley R.A."/>
            <person name="Bignell A."/>
            <person name="Clark L."/>
            <person name="Harris B."/>
            <person name="Ormond D."/>
            <person name="Abdellah Z."/>
            <person name="Brooks K."/>
            <person name="Cherevach I."/>
            <person name="Chillingworth T."/>
            <person name="Woodward J."/>
            <person name="Norberczak H."/>
            <person name="Lord A."/>
            <person name="Arrowsmith C."/>
            <person name="Jagels K."/>
            <person name="Moule S."/>
            <person name="Mungall K."/>
            <person name="Saunders M."/>
            <person name="Whitehead S."/>
            <person name="Chabalgoity J.A."/>
            <person name="Maskell D."/>
            <person name="Humphreys T."/>
            <person name="Roberts M."/>
            <person name="Barrow P.A."/>
            <person name="Dougan G."/>
            <person name="Parkhill J."/>
        </authorList>
    </citation>
    <scope>NUCLEOTIDE SEQUENCE [LARGE SCALE GENOMIC DNA]</scope>
    <source>
        <strain>287/91 / NCTC 13346</strain>
    </source>
</reference>
<comment type="function">
    <text evidence="1">Catalyzes the hydrolytic cleavage of the carbon-nitrogen bond in imidazolone-5-propanoate to yield N-formimidoyl-L-glutamate. It is the third step in the universal histidine degradation pathway.</text>
</comment>
<comment type="catalytic activity">
    <reaction evidence="1">
        <text>4-imidazolone-5-propanoate + H2O = N-formimidoyl-L-glutamate</text>
        <dbReference type="Rhea" id="RHEA:23660"/>
        <dbReference type="ChEBI" id="CHEBI:15377"/>
        <dbReference type="ChEBI" id="CHEBI:58928"/>
        <dbReference type="ChEBI" id="CHEBI:77893"/>
        <dbReference type="EC" id="3.5.2.7"/>
    </reaction>
</comment>
<comment type="cofactor">
    <cofactor evidence="1">
        <name>Zn(2+)</name>
        <dbReference type="ChEBI" id="CHEBI:29105"/>
    </cofactor>
    <cofactor evidence="1">
        <name>Fe(3+)</name>
        <dbReference type="ChEBI" id="CHEBI:29034"/>
    </cofactor>
    <text evidence="1">Binds 1 zinc or iron ion per subunit.</text>
</comment>
<comment type="pathway">
    <text evidence="1">Amino-acid degradation; L-histidine degradation into L-glutamate; N-formimidoyl-L-glutamate from L-histidine: step 3/3.</text>
</comment>
<comment type="subcellular location">
    <subcellularLocation>
        <location evidence="1">Cytoplasm</location>
    </subcellularLocation>
</comment>
<comment type="similarity">
    <text evidence="1">Belongs to the metallo-dependent hydrolases superfamily. HutI family.</text>
</comment>
<name>HUTI_SALG2</name>
<feature type="chain" id="PRO_1000121552" description="Imidazolonepropionase">
    <location>
        <begin position="1"/>
        <end position="407"/>
    </location>
</feature>
<feature type="binding site" evidence="1">
    <location>
        <position position="74"/>
    </location>
    <ligand>
        <name>Fe(3+)</name>
        <dbReference type="ChEBI" id="CHEBI:29034"/>
    </ligand>
</feature>
<feature type="binding site" evidence="1">
    <location>
        <position position="74"/>
    </location>
    <ligand>
        <name>Zn(2+)</name>
        <dbReference type="ChEBI" id="CHEBI:29105"/>
    </ligand>
</feature>
<feature type="binding site" evidence="1">
    <location>
        <position position="76"/>
    </location>
    <ligand>
        <name>Fe(3+)</name>
        <dbReference type="ChEBI" id="CHEBI:29034"/>
    </ligand>
</feature>
<feature type="binding site" evidence="1">
    <location>
        <position position="76"/>
    </location>
    <ligand>
        <name>Zn(2+)</name>
        <dbReference type="ChEBI" id="CHEBI:29105"/>
    </ligand>
</feature>
<feature type="binding site" evidence="1">
    <location>
        <position position="83"/>
    </location>
    <ligand>
        <name>4-imidazolone-5-propanoate</name>
        <dbReference type="ChEBI" id="CHEBI:77893"/>
    </ligand>
</feature>
<feature type="binding site" evidence="1">
    <location>
        <position position="146"/>
    </location>
    <ligand>
        <name>4-imidazolone-5-propanoate</name>
        <dbReference type="ChEBI" id="CHEBI:77893"/>
    </ligand>
</feature>
<feature type="binding site" evidence="1">
    <location>
        <position position="146"/>
    </location>
    <ligand>
        <name>N-formimidoyl-L-glutamate</name>
        <dbReference type="ChEBI" id="CHEBI:58928"/>
    </ligand>
</feature>
<feature type="binding site" evidence="1">
    <location>
        <position position="179"/>
    </location>
    <ligand>
        <name>4-imidazolone-5-propanoate</name>
        <dbReference type="ChEBI" id="CHEBI:77893"/>
    </ligand>
</feature>
<feature type="binding site" evidence="1">
    <location>
        <position position="244"/>
    </location>
    <ligand>
        <name>Fe(3+)</name>
        <dbReference type="ChEBI" id="CHEBI:29034"/>
    </ligand>
</feature>
<feature type="binding site" evidence="1">
    <location>
        <position position="244"/>
    </location>
    <ligand>
        <name>Zn(2+)</name>
        <dbReference type="ChEBI" id="CHEBI:29105"/>
    </ligand>
</feature>
<feature type="binding site" evidence="1">
    <location>
        <position position="247"/>
    </location>
    <ligand>
        <name>4-imidazolone-5-propanoate</name>
        <dbReference type="ChEBI" id="CHEBI:77893"/>
    </ligand>
</feature>
<feature type="binding site" evidence="1">
    <location>
        <position position="319"/>
    </location>
    <ligand>
        <name>Fe(3+)</name>
        <dbReference type="ChEBI" id="CHEBI:29034"/>
    </ligand>
</feature>
<feature type="binding site" evidence="1">
    <location>
        <position position="319"/>
    </location>
    <ligand>
        <name>Zn(2+)</name>
        <dbReference type="ChEBI" id="CHEBI:29105"/>
    </ligand>
</feature>
<feature type="binding site" evidence="1">
    <location>
        <position position="321"/>
    </location>
    <ligand>
        <name>N-formimidoyl-L-glutamate</name>
        <dbReference type="ChEBI" id="CHEBI:58928"/>
    </ligand>
</feature>
<feature type="binding site" evidence="1">
    <location>
        <position position="323"/>
    </location>
    <ligand>
        <name>N-formimidoyl-L-glutamate</name>
        <dbReference type="ChEBI" id="CHEBI:58928"/>
    </ligand>
</feature>
<feature type="binding site" evidence="1">
    <location>
        <position position="324"/>
    </location>
    <ligand>
        <name>4-imidazolone-5-propanoate</name>
        <dbReference type="ChEBI" id="CHEBI:77893"/>
    </ligand>
</feature>
<organism>
    <name type="scientific">Salmonella gallinarum (strain 287/91 / NCTC 13346)</name>
    <dbReference type="NCBI Taxonomy" id="550538"/>
    <lineage>
        <taxon>Bacteria</taxon>
        <taxon>Pseudomonadati</taxon>
        <taxon>Pseudomonadota</taxon>
        <taxon>Gammaproteobacteria</taxon>
        <taxon>Enterobacterales</taxon>
        <taxon>Enterobacteriaceae</taxon>
        <taxon>Salmonella</taxon>
    </lineage>
</organism>
<accession>B5R754</accession>